<keyword id="KW-0963">Cytoplasm</keyword>
<keyword id="KW-0396">Initiation factor</keyword>
<keyword id="KW-0648">Protein biosynthesis</keyword>
<keyword id="KW-1185">Reference proteome</keyword>
<evidence type="ECO:0000255" key="1">
    <source>
        <dbReference type="HAMAP-Rule" id="MF_00080"/>
    </source>
</evidence>
<evidence type="ECO:0000256" key="2">
    <source>
        <dbReference type="SAM" id="MobiDB-lite"/>
    </source>
</evidence>
<name>IF3_MYCTU</name>
<organism>
    <name type="scientific">Mycobacterium tuberculosis (strain ATCC 25618 / H37Rv)</name>
    <dbReference type="NCBI Taxonomy" id="83332"/>
    <lineage>
        <taxon>Bacteria</taxon>
        <taxon>Bacillati</taxon>
        <taxon>Actinomycetota</taxon>
        <taxon>Actinomycetes</taxon>
        <taxon>Mycobacteriales</taxon>
        <taxon>Mycobacteriaceae</taxon>
        <taxon>Mycobacterium</taxon>
        <taxon>Mycobacterium tuberculosis complex</taxon>
    </lineage>
</organism>
<reference key="1">
    <citation type="journal article" date="1998" name="Nature">
        <title>Deciphering the biology of Mycobacterium tuberculosis from the complete genome sequence.</title>
        <authorList>
            <person name="Cole S.T."/>
            <person name="Brosch R."/>
            <person name="Parkhill J."/>
            <person name="Garnier T."/>
            <person name="Churcher C.M."/>
            <person name="Harris D.E."/>
            <person name="Gordon S.V."/>
            <person name="Eiglmeier K."/>
            <person name="Gas S."/>
            <person name="Barry C.E. III"/>
            <person name="Tekaia F."/>
            <person name="Badcock K."/>
            <person name="Basham D."/>
            <person name="Brown D."/>
            <person name="Chillingworth T."/>
            <person name="Connor R."/>
            <person name="Davies R.M."/>
            <person name="Devlin K."/>
            <person name="Feltwell T."/>
            <person name="Gentles S."/>
            <person name="Hamlin N."/>
            <person name="Holroyd S."/>
            <person name="Hornsby T."/>
            <person name="Jagels K."/>
            <person name="Krogh A."/>
            <person name="McLean J."/>
            <person name="Moule S."/>
            <person name="Murphy L.D."/>
            <person name="Oliver S."/>
            <person name="Osborne J."/>
            <person name="Quail M.A."/>
            <person name="Rajandream M.A."/>
            <person name="Rogers J."/>
            <person name="Rutter S."/>
            <person name="Seeger K."/>
            <person name="Skelton S."/>
            <person name="Squares S."/>
            <person name="Squares R."/>
            <person name="Sulston J.E."/>
            <person name="Taylor K."/>
            <person name="Whitehead S."/>
            <person name="Barrell B.G."/>
        </authorList>
    </citation>
    <scope>NUCLEOTIDE SEQUENCE [LARGE SCALE GENOMIC DNA]</scope>
    <source>
        <strain>ATCC 25618 / H37Rv</strain>
    </source>
</reference>
<reference key="2">
    <citation type="journal article" date="2011" name="Mol. Cell. Proteomics">
        <title>Proteogenomic analysis of Mycobacterium tuberculosis by high resolution mass spectrometry.</title>
        <authorList>
            <person name="Kelkar D.S."/>
            <person name="Kumar D."/>
            <person name="Kumar P."/>
            <person name="Balakrishnan L."/>
            <person name="Muthusamy B."/>
            <person name="Yadav A.K."/>
            <person name="Shrivastava P."/>
            <person name="Marimuthu A."/>
            <person name="Anand S."/>
            <person name="Sundaram H."/>
            <person name="Kingsbury R."/>
            <person name="Harsha H.C."/>
            <person name="Nair B."/>
            <person name="Prasad T.S."/>
            <person name="Chauhan D.S."/>
            <person name="Katoch K."/>
            <person name="Katoch V.M."/>
            <person name="Kumar P."/>
            <person name="Chaerkady R."/>
            <person name="Ramachandran S."/>
            <person name="Dash D."/>
            <person name="Pandey A."/>
        </authorList>
    </citation>
    <scope>IDENTIFICATION BY MASS SPECTROMETRY [LARGE SCALE ANALYSIS]</scope>
    <source>
        <strain>ATCC 25618 / H37Rv</strain>
    </source>
</reference>
<gene>
    <name evidence="1" type="primary">infC</name>
    <name type="ordered locus">Rv1641</name>
    <name type="ORF">MTCY06H11.05</name>
</gene>
<comment type="function">
    <text evidence="1">IF-3 binds to the 30S ribosomal subunit and shifts the equilibrium between 70S ribosomes and their 50S and 30S subunits in favor of the free subunits, thus enhancing the availability of 30S subunits on which protein synthesis initiation begins.</text>
</comment>
<comment type="subunit">
    <text evidence="1">Monomer.</text>
</comment>
<comment type="subcellular location">
    <subcellularLocation>
        <location evidence="1">Cytoplasm</location>
    </subcellularLocation>
</comment>
<comment type="similarity">
    <text evidence="1">Belongs to the IF-3 family.</text>
</comment>
<protein>
    <recommendedName>
        <fullName evidence="1">Translation initiation factor IF-3</fullName>
    </recommendedName>
</protein>
<feature type="chain" id="PRO_0000177546" description="Translation initiation factor IF-3">
    <location>
        <begin position="1"/>
        <end position="201"/>
    </location>
</feature>
<feature type="region of interest" description="Disordered" evidence="2">
    <location>
        <begin position="167"/>
        <end position="201"/>
    </location>
</feature>
<feature type="compositionally biased region" description="Basic residues" evidence="2">
    <location>
        <begin position="169"/>
        <end position="178"/>
    </location>
</feature>
<sequence length="201" mass="22333">MSTETRVNERIRVPEVRLIGPGGEQVGIVRIEDALRVAADADLDLVEVAPNARPPVCKIMDYGKYKYEAAQKARESRRNQQQTVVKEQKLRPKIDDHDYETKKGHVVRFLEAGSKVKVTIMFRGREQSRPELGYRLLQRLGADVADYGFIETSAKQDGRNMTMVLAPHRGAKTRARARHPGEPAGGPPPKPTAGDSKAAPN</sequence>
<proteinExistence type="evidence at protein level"/>
<dbReference type="EMBL" id="AL123456">
    <property type="protein sequence ID" value="CCP44406.1"/>
    <property type="molecule type" value="Genomic_DNA"/>
</dbReference>
<dbReference type="PIR" id="D70619">
    <property type="entry name" value="D70619"/>
</dbReference>
<dbReference type="RefSeq" id="NP_216157.1">
    <property type="nucleotide sequence ID" value="NC_000962.3"/>
</dbReference>
<dbReference type="RefSeq" id="WP_003901217.1">
    <property type="nucleotide sequence ID" value="NZ_NVQJ01000016.1"/>
</dbReference>
<dbReference type="SMR" id="P9WKJ9"/>
<dbReference type="FunCoup" id="P9WKJ9">
    <property type="interactions" value="213"/>
</dbReference>
<dbReference type="STRING" id="83332.Rv1641"/>
<dbReference type="PaxDb" id="83332-Rv1641"/>
<dbReference type="GeneID" id="45425611"/>
<dbReference type="GeneID" id="885478"/>
<dbReference type="KEGG" id="mtu:Rv1641"/>
<dbReference type="KEGG" id="mtv:RVBD_1641"/>
<dbReference type="PATRIC" id="fig|83332.111.peg.1826"/>
<dbReference type="TubercuList" id="Rv1641"/>
<dbReference type="eggNOG" id="COG0290">
    <property type="taxonomic scope" value="Bacteria"/>
</dbReference>
<dbReference type="InParanoid" id="P9WKJ9"/>
<dbReference type="OrthoDB" id="9806014at2"/>
<dbReference type="PhylomeDB" id="P9WKJ9"/>
<dbReference type="Proteomes" id="UP000001584">
    <property type="component" value="Chromosome"/>
</dbReference>
<dbReference type="GO" id="GO:0005829">
    <property type="term" value="C:cytosol"/>
    <property type="evidence" value="ECO:0000318"/>
    <property type="project" value="GO_Central"/>
</dbReference>
<dbReference type="GO" id="GO:0005886">
    <property type="term" value="C:plasma membrane"/>
    <property type="evidence" value="ECO:0007005"/>
    <property type="project" value="MTBBASE"/>
</dbReference>
<dbReference type="GO" id="GO:0043022">
    <property type="term" value="F:ribosome binding"/>
    <property type="evidence" value="ECO:0000318"/>
    <property type="project" value="GO_Central"/>
</dbReference>
<dbReference type="GO" id="GO:0003743">
    <property type="term" value="F:translation initiation factor activity"/>
    <property type="evidence" value="ECO:0000318"/>
    <property type="project" value="GO_Central"/>
</dbReference>
<dbReference type="GO" id="GO:0032790">
    <property type="term" value="P:ribosome disassembly"/>
    <property type="evidence" value="ECO:0000318"/>
    <property type="project" value="GO_Central"/>
</dbReference>
<dbReference type="FunFam" id="3.10.20.80:FF:000001">
    <property type="entry name" value="Translation initiation factor IF-3"/>
    <property type="match status" value="1"/>
</dbReference>
<dbReference type="FunFam" id="3.30.110.10:FF:000002">
    <property type="entry name" value="Translation initiation factor IF-3"/>
    <property type="match status" value="1"/>
</dbReference>
<dbReference type="Gene3D" id="3.30.110.10">
    <property type="entry name" value="Translation initiation factor 3 (IF-3), C-terminal domain"/>
    <property type="match status" value="1"/>
</dbReference>
<dbReference type="Gene3D" id="3.10.20.80">
    <property type="entry name" value="Translation initiation factor 3 (IF-3), N-terminal domain"/>
    <property type="match status" value="1"/>
</dbReference>
<dbReference type="HAMAP" id="MF_00080">
    <property type="entry name" value="IF_3"/>
    <property type="match status" value="1"/>
</dbReference>
<dbReference type="InterPro" id="IPR036788">
    <property type="entry name" value="T_IF-3_C_sf"/>
</dbReference>
<dbReference type="InterPro" id="IPR036787">
    <property type="entry name" value="T_IF-3_N_sf"/>
</dbReference>
<dbReference type="InterPro" id="IPR019813">
    <property type="entry name" value="Translation_initiation_fac3_CS"/>
</dbReference>
<dbReference type="InterPro" id="IPR001288">
    <property type="entry name" value="Translation_initiation_fac_3"/>
</dbReference>
<dbReference type="InterPro" id="IPR019815">
    <property type="entry name" value="Translation_initiation_fac_3_C"/>
</dbReference>
<dbReference type="InterPro" id="IPR019814">
    <property type="entry name" value="Translation_initiation_fac_3_N"/>
</dbReference>
<dbReference type="NCBIfam" id="TIGR00168">
    <property type="entry name" value="infC"/>
    <property type="match status" value="1"/>
</dbReference>
<dbReference type="PANTHER" id="PTHR10938">
    <property type="entry name" value="TRANSLATION INITIATION FACTOR IF-3"/>
    <property type="match status" value="1"/>
</dbReference>
<dbReference type="PANTHER" id="PTHR10938:SF0">
    <property type="entry name" value="TRANSLATION INITIATION FACTOR IF-3, MITOCHONDRIAL"/>
    <property type="match status" value="1"/>
</dbReference>
<dbReference type="Pfam" id="PF00707">
    <property type="entry name" value="IF3_C"/>
    <property type="match status" value="1"/>
</dbReference>
<dbReference type="Pfam" id="PF05198">
    <property type="entry name" value="IF3_N"/>
    <property type="match status" value="1"/>
</dbReference>
<dbReference type="SUPFAM" id="SSF55200">
    <property type="entry name" value="Translation initiation factor IF3, C-terminal domain"/>
    <property type="match status" value="1"/>
</dbReference>
<dbReference type="SUPFAM" id="SSF54364">
    <property type="entry name" value="Translation initiation factor IF3, N-terminal domain"/>
    <property type="match status" value="1"/>
</dbReference>
<dbReference type="PROSITE" id="PS00938">
    <property type="entry name" value="IF3"/>
    <property type="match status" value="1"/>
</dbReference>
<accession>P9WKJ9</accession>
<accession>L0T7A4</accession>
<accession>P65135</accession>
<accession>P94975</accession>